<reference key="1">
    <citation type="journal article" date="2001" name="J. Bacteriol.">
        <title>Genome of the bacterium Streptococcus pneumoniae strain R6.</title>
        <authorList>
            <person name="Hoskins J."/>
            <person name="Alborn W.E. Jr."/>
            <person name="Arnold J."/>
            <person name="Blaszczak L.C."/>
            <person name="Burgett S."/>
            <person name="DeHoff B.S."/>
            <person name="Estrem S.T."/>
            <person name="Fritz L."/>
            <person name="Fu D.-J."/>
            <person name="Fuller W."/>
            <person name="Geringer C."/>
            <person name="Gilmour R."/>
            <person name="Glass J.S."/>
            <person name="Khoja H."/>
            <person name="Kraft A.R."/>
            <person name="Lagace R.E."/>
            <person name="LeBlanc D.J."/>
            <person name="Lee L.N."/>
            <person name="Lefkowitz E.J."/>
            <person name="Lu J."/>
            <person name="Matsushima P."/>
            <person name="McAhren S.M."/>
            <person name="McHenney M."/>
            <person name="McLeaster K."/>
            <person name="Mundy C.W."/>
            <person name="Nicas T.I."/>
            <person name="Norris F.H."/>
            <person name="O'Gara M."/>
            <person name="Peery R.B."/>
            <person name="Robertson G.T."/>
            <person name="Rockey P."/>
            <person name="Sun P.-M."/>
            <person name="Winkler M.E."/>
            <person name="Yang Y."/>
            <person name="Young-Bellido M."/>
            <person name="Zhao G."/>
            <person name="Zook C.A."/>
            <person name="Baltz R.H."/>
            <person name="Jaskunas S.R."/>
            <person name="Rosteck P.R. Jr."/>
            <person name="Skatrud P.L."/>
            <person name="Glass J.I."/>
        </authorList>
    </citation>
    <scope>NUCLEOTIDE SEQUENCE [LARGE SCALE GENOMIC DNA]</scope>
    <source>
        <strain>ATCC BAA-255 / R6</strain>
    </source>
</reference>
<accession>Q8DND3</accession>
<comment type="function">
    <text evidence="1">Specifically dimethylates two adjacent adenosines (A1518 and A1519) in the loop of a conserved hairpin near the 3'-end of 16S rRNA in the 30S particle. May play a critical role in biogenesis of 30S subunits.</text>
</comment>
<comment type="catalytic activity">
    <reaction evidence="1">
        <text>adenosine(1518)/adenosine(1519) in 16S rRNA + 4 S-adenosyl-L-methionine = N(6)-dimethyladenosine(1518)/N(6)-dimethyladenosine(1519) in 16S rRNA + 4 S-adenosyl-L-homocysteine + 4 H(+)</text>
        <dbReference type="Rhea" id="RHEA:19609"/>
        <dbReference type="Rhea" id="RHEA-COMP:10232"/>
        <dbReference type="Rhea" id="RHEA-COMP:10233"/>
        <dbReference type="ChEBI" id="CHEBI:15378"/>
        <dbReference type="ChEBI" id="CHEBI:57856"/>
        <dbReference type="ChEBI" id="CHEBI:59789"/>
        <dbReference type="ChEBI" id="CHEBI:74411"/>
        <dbReference type="ChEBI" id="CHEBI:74493"/>
        <dbReference type="EC" id="2.1.1.182"/>
    </reaction>
</comment>
<comment type="subcellular location">
    <subcellularLocation>
        <location evidence="1">Cytoplasm</location>
    </subcellularLocation>
</comment>
<comment type="similarity">
    <text evidence="1">Belongs to the class I-like SAM-binding methyltransferase superfamily. rRNA adenine N(6)-methyltransferase family. RsmA subfamily.</text>
</comment>
<organism>
    <name type="scientific">Streptococcus pneumoniae (strain ATCC BAA-255 / R6)</name>
    <dbReference type="NCBI Taxonomy" id="171101"/>
    <lineage>
        <taxon>Bacteria</taxon>
        <taxon>Bacillati</taxon>
        <taxon>Bacillota</taxon>
        <taxon>Bacilli</taxon>
        <taxon>Lactobacillales</taxon>
        <taxon>Streptococcaceae</taxon>
        <taxon>Streptococcus</taxon>
    </lineage>
</organism>
<evidence type="ECO:0000255" key="1">
    <source>
        <dbReference type="HAMAP-Rule" id="MF_00607"/>
    </source>
</evidence>
<gene>
    <name evidence="1" type="primary">rsmA</name>
    <name evidence="1" type="synonym">ksgA</name>
    <name type="ordered locus">spr1799</name>
</gene>
<feature type="chain" id="PRO_0000101617" description="Ribosomal RNA small subunit methyltransferase A">
    <location>
        <begin position="1"/>
        <end position="290"/>
    </location>
</feature>
<feature type="binding site" evidence="1">
    <location>
        <position position="27"/>
    </location>
    <ligand>
        <name>S-adenosyl-L-methionine</name>
        <dbReference type="ChEBI" id="CHEBI:59789"/>
    </ligand>
</feature>
<feature type="binding site" evidence="1">
    <location>
        <position position="29"/>
    </location>
    <ligand>
        <name>S-adenosyl-L-methionine</name>
        <dbReference type="ChEBI" id="CHEBI:59789"/>
    </ligand>
</feature>
<feature type="binding site" evidence="1">
    <location>
        <position position="54"/>
    </location>
    <ligand>
        <name>S-adenosyl-L-methionine</name>
        <dbReference type="ChEBI" id="CHEBI:59789"/>
    </ligand>
</feature>
<feature type="binding site" evidence="1">
    <location>
        <position position="75"/>
    </location>
    <ligand>
        <name>S-adenosyl-L-methionine</name>
        <dbReference type="ChEBI" id="CHEBI:59789"/>
    </ligand>
</feature>
<feature type="binding site" evidence="1">
    <location>
        <position position="100"/>
    </location>
    <ligand>
        <name>S-adenosyl-L-methionine</name>
        <dbReference type="ChEBI" id="CHEBI:59789"/>
    </ligand>
</feature>
<feature type="binding site" evidence="1">
    <location>
        <position position="125"/>
    </location>
    <ligand>
        <name>S-adenosyl-L-methionine</name>
        <dbReference type="ChEBI" id="CHEBI:59789"/>
    </ligand>
</feature>
<name>RSMA_STRR6</name>
<keyword id="KW-0963">Cytoplasm</keyword>
<keyword id="KW-0489">Methyltransferase</keyword>
<keyword id="KW-1185">Reference proteome</keyword>
<keyword id="KW-0694">RNA-binding</keyword>
<keyword id="KW-0698">rRNA processing</keyword>
<keyword id="KW-0949">S-adenosyl-L-methionine</keyword>
<keyword id="KW-0808">Transferase</keyword>
<dbReference type="EC" id="2.1.1.182" evidence="1"/>
<dbReference type="EMBL" id="AE007317">
    <property type="protein sequence ID" value="AAL00602.1"/>
    <property type="molecule type" value="Genomic_DNA"/>
</dbReference>
<dbReference type="PIR" id="E98096">
    <property type="entry name" value="E98096"/>
</dbReference>
<dbReference type="RefSeq" id="NP_359391.1">
    <property type="nucleotide sequence ID" value="NC_003098.1"/>
</dbReference>
<dbReference type="RefSeq" id="WP_001216869.1">
    <property type="nucleotide sequence ID" value="NC_003098.1"/>
</dbReference>
<dbReference type="SMR" id="Q8DND3"/>
<dbReference type="STRING" id="171101.spr1799"/>
<dbReference type="KEGG" id="spr:spr1799"/>
<dbReference type="PATRIC" id="fig|171101.6.peg.1941"/>
<dbReference type="eggNOG" id="COG0030">
    <property type="taxonomic scope" value="Bacteria"/>
</dbReference>
<dbReference type="HOGENOM" id="CLU_041220_0_0_9"/>
<dbReference type="Proteomes" id="UP000000586">
    <property type="component" value="Chromosome"/>
</dbReference>
<dbReference type="GO" id="GO:0005829">
    <property type="term" value="C:cytosol"/>
    <property type="evidence" value="ECO:0000318"/>
    <property type="project" value="GO_Central"/>
</dbReference>
<dbReference type="GO" id="GO:0052908">
    <property type="term" value="F:16S rRNA (adenine(1518)-N(6)/adenine(1519)-N(6))-dimethyltransferase activity"/>
    <property type="evidence" value="ECO:0007669"/>
    <property type="project" value="UniProtKB-EC"/>
</dbReference>
<dbReference type="GO" id="GO:0003723">
    <property type="term" value="F:RNA binding"/>
    <property type="evidence" value="ECO:0007669"/>
    <property type="project" value="UniProtKB-KW"/>
</dbReference>
<dbReference type="GO" id="GO:0000179">
    <property type="term" value="F:rRNA (adenine-N6,N6-)-dimethyltransferase activity"/>
    <property type="evidence" value="ECO:0000318"/>
    <property type="project" value="GO_Central"/>
</dbReference>
<dbReference type="GO" id="GO:0031167">
    <property type="term" value="P:rRNA methylation"/>
    <property type="evidence" value="ECO:0000318"/>
    <property type="project" value="GO_Central"/>
</dbReference>
<dbReference type="CDD" id="cd02440">
    <property type="entry name" value="AdoMet_MTases"/>
    <property type="match status" value="1"/>
</dbReference>
<dbReference type="FunFam" id="1.10.8.100:FF:000005">
    <property type="entry name" value="Ribosomal RNA small subunit methyltransferase A"/>
    <property type="match status" value="1"/>
</dbReference>
<dbReference type="FunFam" id="3.40.50.150:FF:000023">
    <property type="entry name" value="Ribosomal RNA small subunit methyltransferase A"/>
    <property type="match status" value="1"/>
</dbReference>
<dbReference type="Gene3D" id="1.10.8.100">
    <property type="entry name" value="Ribosomal RNA adenine dimethylase-like, domain 2"/>
    <property type="match status" value="1"/>
</dbReference>
<dbReference type="Gene3D" id="3.40.50.150">
    <property type="entry name" value="Vaccinia Virus protein VP39"/>
    <property type="match status" value="1"/>
</dbReference>
<dbReference type="HAMAP" id="MF_00607">
    <property type="entry name" value="16SrRNA_methyltr_A"/>
    <property type="match status" value="1"/>
</dbReference>
<dbReference type="InterPro" id="IPR001737">
    <property type="entry name" value="KsgA/Erm"/>
</dbReference>
<dbReference type="InterPro" id="IPR023165">
    <property type="entry name" value="rRNA_Ade_diMease-like_C"/>
</dbReference>
<dbReference type="InterPro" id="IPR020596">
    <property type="entry name" value="rRNA_Ade_Mease_Trfase_CS"/>
</dbReference>
<dbReference type="InterPro" id="IPR020598">
    <property type="entry name" value="rRNA_Ade_methylase_Trfase_N"/>
</dbReference>
<dbReference type="InterPro" id="IPR011530">
    <property type="entry name" value="rRNA_adenine_dimethylase"/>
</dbReference>
<dbReference type="InterPro" id="IPR029063">
    <property type="entry name" value="SAM-dependent_MTases_sf"/>
</dbReference>
<dbReference type="NCBIfam" id="TIGR00755">
    <property type="entry name" value="ksgA"/>
    <property type="match status" value="1"/>
</dbReference>
<dbReference type="PANTHER" id="PTHR11727">
    <property type="entry name" value="DIMETHYLADENOSINE TRANSFERASE"/>
    <property type="match status" value="1"/>
</dbReference>
<dbReference type="PANTHER" id="PTHR11727:SF7">
    <property type="entry name" value="DIMETHYLADENOSINE TRANSFERASE-RELATED"/>
    <property type="match status" value="1"/>
</dbReference>
<dbReference type="Pfam" id="PF00398">
    <property type="entry name" value="RrnaAD"/>
    <property type="match status" value="1"/>
</dbReference>
<dbReference type="SMART" id="SM00650">
    <property type="entry name" value="rADc"/>
    <property type="match status" value="1"/>
</dbReference>
<dbReference type="SUPFAM" id="SSF53335">
    <property type="entry name" value="S-adenosyl-L-methionine-dependent methyltransferases"/>
    <property type="match status" value="1"/>
</dbReference>
<dbReference type="PROSITE" id="PS01131">
    <property type="entry name" value="RRNA_A_DIMETH"/>
    <property type="match status" value="1"/>
</dbReference>
<dbReference type="PROSITE" id="PS51689">
    <property type="entry name" value="SAM_RNA_A_N6_MT"/>
    <property type="match status" value="1"/>
</dbReference>
<sequence>MRIADYSVTKAVLERHGFTFKKSFGQNFLTDTNILQKIVDTAEIDDQVNVIEIGPGIGALTEFLAERAAQVMAFEIDHRLVPILADTLRDFDNVTVVNEDILKVDLAQHIQNFKNPNLPIKVVANLPYYITTPILMHLIESGIPFSEFVVMMQKEVADRISAQPNTKAYGSLSIAVQYYMTAKVAFIVPRTVFVPAPNVDSAILKMVRRPEPAVAVEDENFFFKVSKASFTHRRKTLWNNLTGYFGKTEEVKDKLTKALDQAGLSPSVRGEALSLAEFAGLADALKGQGL</sequence>
<proteinExistence type="inferred from homology"/>
<protein>
    <recommendedName>
        <fullName evidence="1">Ribosomal RNA small subunit methyltransferase A</fullName>
        <ecNumber evidence="1">2.1.1.182</ecNumber>
    </recommendedName>
    <alternativeName>
        <fullName evidence="1">16S rRNA (adenine(1518)-N(6)/adenine(1519)-N(6))-dimethyltransferase</fullName>
    </alternativeName>
    <alternativeName>
        <fullName evidence="1">16S rRNA dimethyladenosine transferase</fullName>
    </alternativeName>
    <alternativeName>
        <fullName evidence="1">16S rRNA dimethylase</fullName>
    </alternativeName>
    <alternativeName>
        <fullName evidence="1">S-adenosylmethionine-6-N', N'-adenosyl(rRNA) dimethyltransferase</fullName>
    </alternativeName>
</protein>